<evidence type="ECO:0000250" key="1"/>
<evidence type="ECO:0000250" key="2">
    <source>
        <dbReference type="UniProtKB" id="P0C1Z0"/>
    </source>
</evidence>
<evidence type="ECO:0000250" key="3">
    <source>
        <dbReference type="UniProtKB" id="P60775"/>
    </source>
</evidence>
<evidence type="ECO:0000255" key="4"/>
<evidence type="ECO:0000305" key="5"/>
<comment type="function">
    <text evidence="3">Binds to muscle nicotinic acetylcholine receptor (nAChR) and inhibit acetylcholine from binding to the receptor, thereby impairing neuromuscular transmission.</text>
</comment>
<comment type="subcellular location">
    <subcellularLocation>
        <location evidence="1">Secreted</location>
    </subcellularLocation>
</comment>
<comment type="tissue specificity">
    <text evidence="5">Expressed by the venom gland.</text>
</comment>
<comment type="similarity">
    <text evidence="5">Belongs to the three-finger toxin family. Short-chain subfamily. Type I alpha-neurotoxin sub-subfamily.</text>
</comment>
<accession>Q9YGX1</accession>
<protein>
    <recommendedName>
        <fullName>Short neurotoxin OKI-Ed</fullName>
    </recommendedName>
</protein>
<feature type="signal peptide" evidence="4">
    <location>
        <begin position="1"/>
        <end position="21"/>
    </location>
</feature>
<feature type="chain" id="PRO_0000316171" description="Short neurotoxin OKI-Ed">
    <location>
        <begin position="22"/>
        <end position="83"/>
    </location>
</feature>
<feature type="disulfide bond" evidence="2">
    <location>
        <begin position="24"/>
        <end position="45"/>
    </location>
</feature>
<feature type="disulfide bond" evidence="2">
    <location>
        <begin position="38"/>
        <end position="62"/>
    </location>
</feature>
<feature type="disulfide bond" evidence="2">
    <location>
        <begin position="64"/>
        <end position="75"/>
    </location>
</feature>
<feature type="disulfide bond" evidence="2">
    <location>
        <begin position="76"/>
        <end position="81"/>
    </location>
</feature>
<sequence length="83" mass="9394">MKTLLLTLVVVTIVCLDLGYTRRCFNQQSSEPQTNKSCPPGENSCYRKQWRDHRGTIIERGCGCPTVKPGIKLRCCESEDCNN</sequence>
<organism>
    <name type="scientific">Laticauda semifasciata</name>
    <name type="common">Black-banded sea krait</name>
    <name type="synonym">Pseudolaticauda semifasciata</name>
    <dbReference type="NCBI Taxonomy" id="8631"/>
    <lineage>
        <taxon>Eukaryota</taxon>
        <taxon>Metazoa</taxon>
        <taxon>Chordata</taxon>
        <taxon>Craniata</taxon>
        <taxon>Vertebrata</taxon>
        <taxon>Euteleostomi</taxon>
        <taxon>Lepidosauria</taxon>
        <taxon>Squamata</taxon>
        <taxon>Bifurcata</taxon>
        <taxon>Unidentata</taxon>
        <taxon>Episquamata</taxon>
        <taxon>Toxicofera</taxon>
        <taxon>Serpentes</taxon>
        <taxon>Colubroidea</taxon>
        <taxon>Elapidae</taxon>
        <taxon>Laticaudinae</taxon>
        <taxon>Laticauda</taxon>
    </lineage>
</organism>
<proteinExistence type="inferred from homology"/>
<name>3S1ED_LATSE</name>
<keyword id="KW-0008">Acetylcholine receptor inhibiting toxin</keyword>
<keyword id="KW-1015">Disulfide bond</keyword>
<keyword id="KW-0872">Ion channel impairing toxin</keyword>
<keyword id="KW-0528">Neurotoxin</keyword>
<keyword id="KW-0629">Postsynaptic neurotoxin</keyword>
<keyword id="KW-0964">Secreted</keyword>
<keyword id="KW-0732">Signal</keyword>
<keyword id="KW-0800">Toxin</keyword>
<dbReference type="EMBL" id="AB017928">
    <property type="protein sequence ID" value="BAA75748.1"/>
    <property type="molecule type" value="mRNA"/>
</dbReference>
<dbReference type="SMR" id="Q9YGX1"/>
<dbReference type="GO" id="GO:0005576">
    <property type="term" value="C:extracellular region"/>
    <property type="evidence" value="ECO:0007669"/>
    <property type="project" value="UniProtKB-SubCell"/>
</dbReference>
<dbReference type="GO" id="GO:0030550">
    <property type="term" value="F:acetylcholine receptor inhibitor activity"/>
    <property type="evidence" value="ECO:0007669"/>
    <property type="project" value="UniProtKB-KW"/>
</dbReference>
<dbReference type="GO" id="GO:0099106">
    <property type="term" value="F:ion channel regulator activity"/>
    <property type="evidence" value="ECO:0007669"/>
    <property type="project" value="UniProtKB-KW"/>
</dbReference>
<dbReference type="GO" id="GO:0090729">
    <property type="term" value="F:toxin activity"/>
    <property type="evidence" value="ECO:0007669"/>
    <property type="project" value="UniProtKB-KW"/>
</dbReference>
<dbReference type="CDD" id="cd00206">
    <property type="entry name" value="TFP_snake_toxin"/>
    <property type="match status" value="1"/>
</dbReference>
<dbReference type="FunFam" id="2.10.60.10:FF:000024">
    <property type="entry name" value="Cytotoxin 1"/>
    <property type="match status" value="1"/>
</dbReference>
<dbReference type="Gene3D" id="2.10.60.10">
    <property type="entry name" value="CD59"/>
    <property type="match status" value="1"/>
</dbReference>
<dbReference type="InterPro" id="IPR003571">
    <property type="entry name" value="Snake_3FTx"/>
</dbReference>
<dbReference type="InterPro" id="IPR045860">
    <property type="entry name" value="Snake_toxin-like_sf"/>
</dbReference>
<dbReference type="InterPro" id="IPR018354">
    <property type="entry name" value="Snake_toxin_con_site"/>
</dbReference>
<dbReference type="InterPro" id="IPR054131">
    <property type="entry name" value="Toxin_cobra-type"/>
</dbReference>
<dbReference type="Pfam" id="PF21947">
    <property type="entry name" value="Toxin_cobra-type"/>
    <property type="match status" value="1"/>
</dbReference>
<dbReference type="SUPFAM" id="SSF57302">
    <property type="entry name" value="Snake toxin-like"/>
    <property type="match status" value="1"/>
</dbReference>
<dbReference type="PROSITE" id="PS00272">
    <property type="entry name" value="SNAKE_TOXIN"/>
    <property type="match status" value="1"/>
</dbReference>
<reference key="1">
    <citation type="journal article" date="1998" name="Prog. Nucleic Acid Res. Mol. Biol.">
        <title>Molecular evolution of snake toxins: is the functional diversity of snake toxins associated with a mechanism of accelerated evolution?</title>
        <authorList>
            <person name="Ohno M."/>
            <person name="Menez R."/>
            <person name="Ogawa T."/>
            <person name="Danse J.M."/>
            <person name="Shimohigashi Y."/>
            <person name="Fromen C."/>
            <person name="Ducancel F."/>
            <person name="Zinn-Justin S."/>
            <person name="Le Du M.H."/>
            <person name="Boulain J.-C."/>
            <person name="Tamiya T."/>
            <person name="Menez A."/>
        </authorList>
    </citation>
    <scope>NUCLEOTIDE SEQUENCE [MRNA]</scope>
    <source>
        <tissue>Venom gland</tissue>
    </source>
</reference>